<gene>
    <name type="primary">gmhB</name>
    <name type="ordered locus">HD_1666</name>
</gene>
<proteinExistence type="inferred from homology"/>
<sequence>MGKKAVFLDRDGTLNIDHGYVHQIDDFQFIEGVGKALKQLQDKGYLLVLVTNQSGIARGYFSEQQFQQLTEWMDWSLDEDYGVVLDGIYYCPHYPEGQGEYQQKCDCRKPKAGMFQQAIKDLNIDPAQSYMVGDKLEDLLAAETAGVKTKVLVRTGKAITAEGEKKADLVLNSLVDLVPYVN</sequence>
<accession>Q7VL21</accession>
<reference key="1">
    <citation type="submission" date="2003-06" db="EMBL/GenBank/DDBJ databases">
        <title>The complete genome sequence of Haemophilus ducreyi.</title>
        <authorList>
            <person name="Munson R.S. Jr."/>
            <person name="Ray W.C."/>
            <person name="Mahairas G."/>
            <person name="Sabo P."/>
            <person name="Mungur R."/>
            <person name="Johnson L."/>
            <person name="Nguyen D."/>
            <person name="Wang J."/>
            <person name="Forst C."/>
            <person name="Hood L."/>
        </authorList>
    </citation>
    <scope>NUCLEOTIDE SEQUENCE [LARGE SCALE GENOMIC DNA]</scope>
    <source>
        <strain>35000HP / ATCC 700724</strain>
    </source>
</reference>
<reference key="2">
    <citation type="journal article" date="2002" name="Microbiology">
        <title>Novel pathways for biosynthesis of nucleotide-activated glycero-manno-heptose precursors of bacterial glycoproteins and cell surface polysaccharides.</title>
        <authorList>
            <person name="Valvano M.A."/>
            <person name="Messner P."/>
            <person name="Kosma P."/>
        </authorList>
    </citation>
    <scope>BIOSYNTHESIS OF NUCLEOTIDE-ACTIVATED GLYCERO-MANNO-HEPTOSE</scope>
</reference>
<feature type="chain" id="PRO_0000209393" description="D-glycero-beta-D-manno-heptose-1,7-bisphosphate 7-phosphatase">
    <location>
        <begin position="1"/>
        <end position="182"/>
    </location>
</feature>
<feature type="active site" description="Nucleophile" evidence="1">
    <location>
        <position position="9"/>
    </location>
</feature>
<feature type="active site" description="Proton donor" evidence="1">
    <location>
        <position position="11"/>
    </location>
</feature>
<feature type="binding site" evidence="1">
    <location>
        <begin position="9"/>
        <end position="11"/>
    </location>
    <ligand>
        <name>substrate</name>
    </ligand>
</feature>
<feature type="binding site" evidence="1">
    <location>
        <position position="9"/>
    </location>
    <ligand>
        <name>Mg(2+)</name>
        <dbReference type="ChEBI" id="CHEBI:18420"/>
    </ligand>
</feature>
<feature type="binding site" evidence="1">
    <location>
        <position position="11"/>
    </location>
    <ligand>
        <name>Mg(2+)</name>
        <dbReference type="ChEBI" id="CHEBI:18420"/>
    </ligand>
</feature>
<feature type="binding site" evidence="1">
    <location>
        <begin position="17"/>
        <end position="20"/>
    </location>
    <ligand>
        <name>substrate</name>
    </ligand>
</feature>
<feature type="binding site" evidence="1">
    <location>
        <begin position="51"/>
        <end position="54"/>
    </location>
    <ligand>
        <name>substrate</name>
    </ligand>
</feature>
<feature type="binding site" evidence="2">
    <location>
        <position position="91"/>
    </location>
    <ligand>
        <name>Zn(2+)</name>
        <dbReference type="ChEBI" id="CHEBI:29105"/>
    </ligand>
</feature>
<feature type="binding site" evidence="2">
    <location>
        <position position="93"/>
    </location>
    <ligand>
        <name>Zn(2+)</name>
        <dbReference type="ChEBI" id="CHEBI:29105"/>
    </ligand>
</feature>
<feature type="binding site" evidence="2">
    <location>
        <position position="105"/>
    </location>
    <ligand>
        <name>Zn(2+)</name>
        <dbReference type="ChEBI" id="CHEBI:29105"/>
    </ligand>
</feature>
<feature type="binding site" evidence="2">
    <location>
        <position position="107"/>
    </location>
    <ligand>
        <name>Zn(2+)</name>
        <dbReference type="ChEBI" id="CHEBI:29105"/>
    </ligand>
</feature>
<feature type="binding site" evidence="1">
    <location>
        <begin position="108"/>
        <end position="109"/>
    </location>
    <ligand>
        <name>substrate</name>
    </ligand>
</feature>
<feature type="binding site" evidence="1">
    <location>
        <position position="134"/>
    </location>
    <ligand>
        <name>Mg(2+)</name>
        <dbReference type="ChEBI" id="CHEBI:18420"/>
    </ligand>
</feature>
<feature type="binding site" evidence="1">
    <location>
        <position position="135"/>
    </location>
    <ligand>
        <name>Mg(2+)</name>
        <dbReference type="ChEBI" id="CHEBI:18420"/>
    </ligand>
</feature>
<feature type="binding site" evidence="1">
    <location>
        <position position="135"/>
    </location>
    <ligand>
        <name>substrate</name>
    </ligand>
</feature>
<feature type="site" description="Stabilizes the phosphoryl group" evidence="1">
    <location>
        <position position="51"/>
    </location>
</feature>
<feature type="site" description="Contributes to substrate recognition" evidence="1">
    <location>
        <position position="108"/>
    </location>
</feature>
<feature type="site" description="Stabilizes the phosphoryl group" evidence="1">
    <location>
        <position position="109"/>
    </location>
</feature>
<name>GMHBB_HAEDU</name>
<comment type="function">
    <text evidence="1">Converts the D-glycero-beta-D-manno-heptose 1,7-bisphosphate intermediate into D-glycero-beta-D-manno-heptose 1-phosphate by removing the phosphate group at the C-7 position.</text>
</comment>
<comment type="catalytic activity">
    <reaction>
        <text>D-glycero-beta-D-manno-heptose 1,7-bisphosphate + H2O = D-glycero-beta-D-manno-heptose 1-phosphate + phosphate</text>
        <dbReference type="Rhea" id="RHEA:28518"/>
        <dbReference type="ChEBI" id="CHEBI:15377"/>
        <dbReference type="ChEBI" id="CHEBI:43474"/>
        <dbReference type="ChEBI" id="CHEBI:60208"/>
        <dbReference type="ChEBI" id="CHEBI:61593"/>
        <dbReference type="EC" id="3.1.3.82"/>
    </reaction>
</comment>
<comment type="cofactor">
    <cofactor evidence="1">
        <name>Mg(2+)</name>
        <dbReference type="ChEBI" id="CHEBI:18420"/>
    </cofactor>
</comment>
<comment type="cofactor">
    <cofactor evidence="1">
        <name>Zn(2+)</name>
        <dbReference type="ChEBI" id="CHEBI:29105"/>
    </cofactor>
</comment>
<comment type="pathway">
    <text>Nucleotide-sugar biosynthesis; ADP-L-glycero-beta-D-manno-heptose biosynthesis; ADP-L-glycero-beta-D-manno-heptose from D-glycero-beta-D-manno-heptose 7-phosphate: step 2/4.</text>
</comment>
<comment type="pathway">
    <text>Bacterial outer membrane biogenesis; LOS core biosynthesis.</text>
</comment>
<comment type="subunit">
    <text evidence="1">Monomer.</text>
</comment>
<comment type="subcellular location">
    <subcellularLocation>
        <location evidence="1">Cytoplasm</location>
    </subcellularLocation>
</comment>
<comment type="similarity">
    <text evidence="3">Belongs to the GmhB family.</text>
</comment>
<evidence type="ECO:0000250" key="1"/>
<evidence type="ECO:0000250" key="2">
    <source>
        <dbReference type="UniProtKB" id="Q7WG29"/>
    </source>
</evidence>
<evidence type="ECO:0000305" key="3"/>
<keyword id="KW-0119">Carbohydrate metabolism</keyword>
<keyword id="KW-0963">Cytoplasm</keyword>
<keyword id="KW-0378">Hydrolase</keyword>
<keyword id="KW-0460">Magnesium</keyword>
<keyword id="KW-0479">Metal-binding</keyword>
<keyword id="KW-1185">Reference proteome</keyword>
<keyword id="KW-0862">Zinc</keyword>
<dbReference type="EC" id="3.1.3.82"/>
<dbReference type="EMBL" id="AE017143">
    <property type="protein sequence ID" value="AAP96438.1"/>
    <property type="molecule type" value="Genomic_DNA"/>
</dbReference>
<dbReference type="RefSeq" id="WP_010945470.1">
    <property type="nucleotide sequence ID" value="NC_002940.2"/>
</dbReference>
<dbReference type="SMR" id="Q7VL21"/>
<dbReference type="STRING" id="233412.HD_1666"/>
<dbReference type="KEGG" id="hdu:HD_1666"/>
<dbReference type="eggNOG" id="COG0241">
    <property type="taxonomic scope" value="Bacteria"/>
</dbReference>
<dbReference type="HOGENOM" id="CLU_085077_3_0_6"/>
<dbReference type="OrthoDB" id="9781367at2"/>
<dbReference type="BRENDA" id="3.1.3.82">
    <property type="organism ID" value="2526"/>
</dbReference>
<dbReference type="UniPathway" id="UPA00356">
    <property type="reaction ID" value="UER00438"/>
</dbReference>
<dbReference type="UniPathway" id="UPA00976"/>
<dbReference type="Proteomes" id="UP000001022">
    <property type="component" value="Chromosome"/>
</dbReference>
<dbReference type="GO" id="GO:0005737">
    <property type="term" value="C:cytoplasm"/>
    <property type="evidence" value="ECO:0007669"/>
    <property type="project" value="UniProtKB-SubCell"/>
</dbReference>
<dbReference type="GO" id="GO:0034200">
    <property type="term" value="F:D-glycero-beta-D-manno-heptose 1,7-bisphosphate 7-phosphatase activity"/>
    <property type="evidence" value="ECO:0000250"/>
    <property type="project" value="UniProtKB"/>
</dbReference>
<dbReference type="GO" id="GO:0000287">
    <property type="term" value="F:magnesium ion binding"/>
    <property type="evidence" value="ECO:0000250"/>
    <property type="project" value="UniProtKB"/>
</dbReference>
<dbReference type="GO" id="GO:0008270">
    <property type="term" value="F:zinc ion binding"/>
    <property type="evidence" value="ECO:0000250"/>
    <property type="project" value="UniProtKB"/>
</dbReference>
<dbReference type="GO" id="GO:0097171">
    <property type="term" value="P:ADP-L-glycero-beta-D-manno-heptose biosynthetic process"/>
    <property type="evidence" value="ECO:0007669"/>
    <property type="project" value="UniProtKB-UniPathway"/>
</dbReference>
<dbReference type="GO" id="GO:0005975">
    <property type="term" value="P:carbohydrate metabolic process"/>
    <property type="evidence" value="ECO:0007669"/>
    <property type="project" value="InterPro"/>
</dbReference>
<dbReference type="CDD" id="cd07503">
    <property type="entry name" value="HAD_HisB-N"/>
    <property type="match status" value="1"/>
</dbReference>
<dbReference type="FunFam" id="3.40.50.1000:FF:000037">
    <property type="entry name" value="D,D-heptose 1,7-bisphosphate phosphatase"/>
    <property type="match status" value="1"/>
</dbReference>
<dbReference type="Gene3D" id="3.40.50.1000">
    <property type="entry name" value="HAD superfamily/HAD-like"/>
    <property type="match status" value="1"/>
</dbReference>
<dbReference type="InterPro" id="IPR036412">
    <property type="entry name" value="HAD-like_sf"/>
</dbReference>
<dbReference type="InterPro" id="IPR006549">
    <property type="entry name" value="HAD-SF_hydro_IIIA"/>
</dbReference>
<dbReference type="InterPro" id="IPR023214">
    <property type="entry name" value="HAD_sf"/>
</dbReference>
<dbReference type="InterPro" id="IPR004446">
    <property type="entry name" value="Heptose_bisP_phosphatase"/>
</dbReference>
<dbReference type="InterPro" id="IPR006543">
    <property type="entry name" value="Histidinol-phos"/>
</dbReference>
<dbReference type="NCBIfam" id="TIGR00213">
    <property type="entry name" value="GmhB_yaeD"/>
    <property type="match status" value="1"/>
</dbReference>
<dbReference type="NCBIfam" id="TIGR01662">
    <property type="entry name" value="HAD-SF-IIIA"/>
    <property type="match status" value="1"/>
</dbReference>
<dbReference type="NCBIfam" id="TIGR01656">
    <property type="entry name" value="Histidinol-ppas"/>
    <property type="match status" value="1"/>
</dbReference>
<dbReference type="NCBIfam" id="NF006506">
    <property type="entry name" value="PRK08942.1"/>
    <property type="match status" value="1"/>
</dbReference>
<dbReference type="PANTHER" id="PTHR42891">
    <property type="entry name" value="D-GLYCERO-BETA-D-MANNO-HEPTOSE-1,7-BISPHOSPHATE 7-PHOSPHATASE"/>
    <property type="match status" value="1"/>
</dbReference>
<dbReference type="PANTHER" id="PTHR42891:SF1">
    <property type="entry name" value="D-GLYCERO-BETA-D-MANNO-HEPTOSE-1,7-BISPHOSPHATE 7-PHOSPHATASE"/>
    <property type="match status" value="1"/>
</dbReference>
<dbReference type="Pfam" id="PF13242">
    <property type="entry name" value="Hydrolase_like"/>
    <property type="match status" value="1"/>
</dbReference>
<dbReference type="PIRSF" id="PIRSF004682">
    <property type="entry name" value="GmhB"/>
    <property type="match status" value="1"/>
</dbReference>
<dbReference type="SUPFAM" id="SSF56784">
    <property type="entry name" value="HAD-like"/>
    <property type="match status" value="1"/>
</dbReference>
<organism>
    <name type="scientific">Haemophilus ducreyi (strain 35000HP / ATCC 700724)</name>
    <dbReference type="NCBI Taxonomy" id="233412"/>
    <lineage>
        <taxon>Bacteria</taxon>
        <taxon>Pseudomonadati</taxon>
        <taxon>Pseudomonadota</taxon>
        <taxon>Gammaproteobacteria</taxon>
        <taxon>Pasteurellales</taxon>
        <taxon>Pasteurellaceae</taxon>
        <taxon>Haemophilus</taxon>
    </lineage>
</organism>
<protein>
    <recommendedName>
        <fullName>D-glycero-beta-D-manno-heptose-1,7-bisphosphate 7-phosphatase</fullName>
        <ecNumber>3.1.3.82</ecNumber>
    </recommendedName>
    <alternativeName>
        <fullName>D,D-heptose 1,7-bisphosphate phosphatase</fullName>
        <shortName>HBP phosphatase</shortName>
    </alternativeName>
</protein>